<reference key="1">
    <citation type="journal article" date="2000" name="DNA Res.">
        <title>Structural analysis of Arabidopsis thaliana chromosome 3. I. Sequence features of the regions of 4,504,864 bp covered by sixty P1 and TAC clones.</title>
        <authorList>
            <person name="Sato S."/>
            <person name="Nakamura Y."/>
            <person name="Kaneko T."/>
            <person name="Katoh T."/>
            <person name="Asamizu E."/>
            <person name="Tabata S."/>
        </authorList>
    </citation>
    <scope>NUCLEOTIDE SEQUENCE [LARGE SCALE GENOMIC DNA]</scope>
    <source>
        <strain>cv. Columbia</strain>
    </source>
</reference>
<reference key="2">
    <citation type="journal article" date="2017" name="Plant J.">
        <title>Araport11: a complete reannotation of the Arabidopsis thaliana reference genome.</title>
        <authorList>
            <person name="Cheng C.Y."/>
            <person name="Krishnakumar V."/>
            <person name="Chan A.P."/>
            <person name="Thibaud-Nissen F."/>
            <person name="Schobel S."/>
            <person name="Town C.D."/>
        </authorList>
    </citation>
    <scope>GENOME REANNOTATION</scope>
    <source>
        <strain>cv. Columbia</strain>
    </source>
</reference>
<reference key="3">
    <citation type="journal article" date="2003" name="Science">
        <title>Empirical analysis of transcriptional activity in the Arabidopsis genome.</title>
        <authorList>
            <person name="Yamada K."/>
            <person name="Lim J."/>
            <person name="Dale J.M."/>
            <person name="Chen H."/>
            <person name="Shinn P."/>
            <person name="Palm C.J."/>
            <person name="Southwick A.M."/>
            <person name="Wu H.C."/>
            <person name="Kim C.J."/>
            <person name="Nguyen M."/>
            <person name="Pham P.K."/>
            <person name="Cheuk R.F."/>
            <person name="Karlin-Newmann G."/>
            <person name="Liu S.X."/>
            <person name="Lam B."/>
            <person name="Sakano H."/>
            <person name="Wu T."/>
            <person name="Yu G."/>
            <person name="Miranda M."/>
            <person name="Quach H.L."/>
            <person name="Tripp M."/>
            <person name="Chang C.H."/>
            <person name="Lee J.M."/>
            <person name="Toriumi M.J."/>
            <person name="Chan M.M."/>
            <person name="Tang C.C."/>
            <person name="Onodera C.S."/>
            <person name="Deng J.M."/>
            <person name="Akiyama K."/>
            <person name="Ansari Y."/>
            <person name="Arakawa T."/>
            <person name="Banh J."/>
            <person name="Banno F."/>
            <person name="Bowser L."/>
            <person name="Brooks S.Y."/>
            <person name="Carninci P."/>
            <person name="Chao Q."/>
            <person name="Choy N."/>
            <person name="Enju A."/>
            <person name="Goldsmith A.D."/>
            <person name="Gurjal M."/>
            <person name="Hansen N.F."/>
            <person name="Hayashizaki Y."/>
            <person name="Johnson-Hopson C."/>
            <person name="Hsuan V.W."/>
            <person name="Iida K."/>
            <person name="Karnes M."/>
            <person name="Khan S."/>
            <person name="Koesema E."/>
            <person name="Ishida J."/>
            <person name="Jiang P.X."/>
            <person name="Jones T."/>
            <person name="Kawai J."/>
            <person name="Kamiya A."/>
            <person name="Meyers C."/>
            <person name="Nakajima M."/>
            <person name="Narusaka M."/>
            <person name="Seki M."/>
            <person name="Sakurai T."/>
            <person name="Satou M."/>
            <person name="Tamse R."/>
            <person name="Vaysberg M."/>
            <person name="Wallender E.K."/>
            <person name="Wong C."/>
            <person name="Yamamura Y."/>
            <person name="Yuan S."/>
            <person name="Shinozaki K."/>
            <person name="Davis R.W."/>
            <person name="Theologis A."/>
            <person name="Ecker J.R."/>
        </authorList>
    </citation>
    <scope>NUCLEOTIDE SEQUENCE [LARGE SCALE MRNA]</scope>
    <source>
        <strain>cv. Columbia</strain>
    </source>
</reference>
<reference key="4">
    <citation type="submission" date="2002-03" db="EMBL/GenBank/DDBJ databases">
        <title>Full-length cDNA from Arabidopsis thaliana.</title>
        <authorList>
            <person name="Brover V.V."/>
            <person name="Troukhan M.E."/>
            <person name="Alexandrov N.A."/>
            <person name="Lu Y.-P."/>
            <person name="Flavell R.B."/>
            <person name="Feldmann K.A."/>
        </authorList>
    </citation>
    <scope>NUCLEOTIDE SEQUENCE [LARGE SCALE MRNA]</scope>
</reference>
<reference key="5">
    <citation type="journal article" date="2001" name="Plant Physiol.">
        <title>The organization of cytoplasmic ribosomal protein genes in the Arabidopsis genome.</title>
        <authorList>
            <person name="Barakat A."/>
            <person name="Szick-Miranda K."/>
            <person name="Chang I.-F."/>
            <person name="Guyot R."/>
            <person name="Blanc G."/>
            <person name="Cooke R."/>
            <person name="Delseny M."/>
            <person name="Bailey-Serres J."/>
        </authorList>
    </citation>
    <scope>GENE FAMILY ORGANIZATION</scope>
    <scope>NOMENCLATURE</scope>
</reference>
<reference key="6">
    <citation type="journal article" date="2023" name="Plant Cell">
        <title>An updated nomenclature for plant ribosomal protein genes.</title>
        <authorList>
            <person name="Scarpin M.R."/>
            <person name="Busche M."/>
            <person name="Martinez R.E."/>
            <person name="Harper L.C."/>
            <person name="Reiser L."/>
            <person name="Szakonyi D."/>
            <person name="Merchante C."/>
            <person name="Lan T."/>
            <person name="Xiong W."/>
            <person name="Mo B."/>
            <person name="Tang G."/>
            <person name="Chen X."/>
            <person name="Bailey-Serres J."/>
            <person name="Browning K.S."/>
            <person name="Brunkard J.O."/>
        </authorList>
    </citation>
    <scope>NOMENCLATURE</scope>
</reference>
<dbReference type="EMBL" id="AB023038">
    <property type="protein sequence ID" value="BAB02392.1"/>
    <property type="molecule type" value="Genomic_DNA"/>
</dbReference>
<dbReference type="EMBL" id="CP002686">
    <property type="protein sequence ID" value="AEE75546.1"/>
    <property type="molecule type" value="Genomic_DNA"/>
</dbReference>
<dbReference type="EMBL" id="AY072540">
    <property type="protein sequence ID" value="AAL60048.1"/>
    <property type="molecule type" value="mRNA"/>
</dbReference>
<dbReference type="EMBL" id="AY097377">
    <property type="protein sequence ID" value="AAM19893.1"/>
    <property type="molecule type" value="mRNA"/>
</dbReference>
<dbReference type="EMBL" id="AY088351">
    <property type="protein sequence ID" value="AAM65890.1"/>
    <property type="molecule type" value="mRNA"/>
</dbReference>
<dbReference type="RefSeq" id="NP_188078.1">
    <property type="nucleotide sequence ID" value="NM_112321.3"/>
</dbReference>
<dbReference type="SMR" id="Q9LUD4"/>
<dbReference type="BioGRID" id="6022">
    <property type="interactions" value="37"/>
</dbReference>
<dbReference type="FunCoup" id="Q9LUD4">
    <property type="interactions" value="3775"/>
</dbReference>
<dbReference type="STRING" id="3702.Q9LUD4"/>
<dbReference type="PaxDb" id="3702-AT3G14600.1"/>
<dbReference type="ProteomicsDB" id="226094"/>
<dbReference type="EnsemblPlants" id="AT3G14600.1">
    <property type="protein sequence ID" value="AT3G14600.1"/>
    <property type="gene ID" value="AT3G14600"/>
</dbReference>
<dbReference type="GeneID" id="820688"/>
<dbReference type="Gramene" id="AT3G14600.1">
    <property type="protein sequence ID" value="AT3G14600.1"/>
    <property type="gene ID" value="AT3G14600"/>
</dbReference>
<dbReference type="KEGG" id="ath:AT3G14600"/>
<dbReference type="Araport" id="AT3G14600"/>
<dbReference type="TAIR" id="AT3G14600"/>
<dbReference type="eggNOG" id="KOG0829">
    <property type="taxonomic scope" value="Eukaryota"/>
</dbReference>
<dbReference type="HOGENOM" id="CLU_080773_1_1_1"/>
<dbReference type="InParanoid" id="Q9LUD4"/>
<dbReference type="OMA" id="CIFAKND"/>
<dbReference type="OrthoDB" id="1027569at2759"/>
<dbReference type="PhylomeDB" id="Q9LUD4"/>
<dbReference type="CD-CODE" id="4299E36E">
    <property type="entry name" value="Nucleolus"/>
</dbReference>
<dbReference type="PRO" id="PR:Q9LUD4"/>
<dbReference type="Proteomes" id="UP000006548">
    <property type="component" value="Chromosome 3"/>
</dbReference>
<dbReference type="ExpressionAtlas" id="Q9LUD4">
    <property type="expression patterns" value="baseline and differential"/>
</dbReference>
<dbReference type="GO" id="GO:0005829">
    <property type="term" value="C:cytosol"/>
    <property type="evidence" value="ECO:0007005"/>
    <property type="project" value="TAIR"/>
</dbReference>
<dbReference type="GO" id="GO:0022625">
    <property type="term" value="C:cytosolic large ribosomal subunit"/>
    <property type="evidence" value="ECO:0007005"/>
    <property type="project" value="TAIR"/>
</dbReference>
<dbReference type="GO" id="GO:0022626">
    <property type="term" value="C:cytosolic ribosome"/>
    <property type="evidence" value="ECO:0007005"/>
    <property type="project" value="TAIR"/>
</dbReference>
<dbReference type="GO" id="GO:0009506">
    <property type="term" value="C:plasmodesma"/>
    <property type="evidence" value="ECO:0007005"/>
    <property type="project" value="TAIR"/>
</dbReference>
<dbReference type="GO" id="GO:0003729">
    <property type="term" value="F:mRNA binding"/>
    <property type="evidence" value="ECO:0000314"/>
    <property type="project" value="TAIR"/>
</dbReference>
<dbReference type="GO" id="GO:0003735">
    <property type="term" value="F:structural constituent of ribosome"/>
    <property type="evidence" value="ECO:0000314"/>
    <property type="project" value="CAFA"/>
</dbReference>
<dbReference type="GO" id="GO:0006412">
    <property type="term" value="P:translation"/>
    <property type="evidence" value="ECO:0007669"/>
    <property type="project" value="InterPro"/>
</dbReference>
<dbReference type="FunFam" id="3.10.20.10:FF:000001">
    <property type="entry name" value="60S ribosomal protein L18a"/>
    <property type="match status" value="1"/>
</dbReference>
<dbReference type="FunFam" id="3.10.20.10:FF:000002">
    <property type="entry name" value="60S ribosomal protein L18a"/>
    <property type="match status" value="1"/>
</dbReference>
<dbReference type="Gene3D" id="3.10.20.10">
    <property type="match status" value="2"/>
</dbReference>
<dbReference type="HAMAP" id="MF_00273">
    <property type="entry name" value="Ribosomal_eL20"/>
    <property type="match status" value="1"/>
</dbReference>
<dbReference type="InterPro" id="IPR028877">
    <property type="entry name" value="Ribosomal_eL20"/>
</dbReference>
<dbReference type="InterPro" id="IPR023573">
    <property type="entry name" value="Ribosomal_eL20_dom"/>
</dbReference>
<dbReference type="InterPro" id="IPR021138">
    <property type="entry name" value="Ribosomal_eL20_eukaryotes"/>
</dbReference>
<dbReference type="PANTHER" id="PTHR10052">
    <property type="entry name" value="60S RIBOSOMAL PROTEIN L18A"/>
    <property type="match status" value="1"/>
</dbReference>
<dbReference type="Pfam" id="PF01775">
    <property type="entry name" value="Ribosomal_L18A"/>
    <property type="match status" value="1"/>
</dbReference>
<dbReference type="PIRSF" id="PIRSF002190">
    <property type="entry name" value="Ribosomal_L18a"/>
    <property type="match status" value="1"/>
</dbReference>
<dbReference type="SUPFAM" id="SSF160374">
    <property type="entry name" value="RplX-like"/>
    <property type="match status" value="1"/>
</dbReference>
<proteinExistence type="evidence at transcript level"/>
<comment type="similarity">
    <text evidence="2">Belongs to the eukaryotic ribosomal protein eL20 family.</text>
</comment>
<name>R18A3_ARATH</name>
<evidence type="ECO:0000303" key="1">
    <source>
    </source>
</evidence>
<evidence type="ECO:0000305" key="2"/>
<organism>
    <name type="scientific">Arabidopsis thaliana</name>
    <name type="common">Mouse-ear cress</name>
    <dbReference type="NCBI Taxonomy" id="3702"/>
    <lineage>
        <taxon>Eukaryota</taxon>
        <taxon>Viridiplantae</taxon>
        <taxon>Streptophyta</taxon>
        <taxon>Embryophyta</taxon>
        <taxon>Tracheophyta</taxon>
        <taxon>Spermatophyta</taxon>
        <taxon>Magnoliopsida</taxon>
        <taxon>eudicotyledons</taxon>
        <taxon>Gunneridae</taxon>
        <taxon>Pentapetalae</taxon>
        <taxon>rosids</taxon>
        <taxon>malvids</taxon>
        <taxon>Brassicales</taxon>
        <taxon>Brassicaceae</taxon>
        <taxon>Camelineae</taxon>
        <taxon>Arabidopsis</taxon>
    </lineage>
</organism>
<keyword id="KW-1185">Reference proteome</keyword>
<keyword id="KW-0687">Ribonucleoprotein</keyword>
<keyword id="KW-0689">Ribosomal protein</keyword>
<gene>
    <name type="primary">RPL18AC</name>
    <name type="ordered locus">At3g14600</name>
    <name type="ORF">MIE1.10</name>
</gene>
<feature type="chain" id="PRO_0000213935" description="Large ribosomal subunit protein eL20x">
    <location>
        <begin position="1"/>
        <end position="178"/>
    </location>
</feature>
<feature type="sequence conflict" description="In Ref. 4; AAM65890." evidence="2" ref="4">
    <original>M</original>
    <variation>I</variation>
    <location>
        <position position="112"/>
    </location>
</feature>
<accession>Q9LUD4</accession>
<accession>Q8L9M5</accession>
<protein>
    <recommendedName>
        <fullName evidence="1">Large ribosomal subunit protein eL20x</fullName>
    </recommendedName>
    <alternativeName>
        <fullName>60S ribosomal protein L18a-3</fullName>
    </alternativeName>
</protein>
<sequence length="178" mass="21309">MGGFRFHQYQVVGRALPTENDEHPKIYRMKLWGRNEVCAKSKFWYFMRKLKKVKKSNGQMLAINEIFEKNPTTIKNYGIWLRYQSRTGYHNMYKEYRDTTLNGGVEQMYTEMASRHRVRFPCIQIIKTATVPAKLCKREITKQFHNSKIKFPLVFRKVRPPSRKLKTTYKASKPNLFM</sequence>